<dbReference type="EMBL" id="AE000783">
    <property type="protein sequence ID" value="AAC66854.2"/>
    <property type="molecule type" value="Genomic_DNA"/>
</dbReference>
<dbReference type="PIR" id="G70160">
    <property type="entry name" value="G70160"/>
</dbReference>
<dbReference type="RefSeq" id="NP_212622.2">
    <property type="nucleotide sequence ID" value="NC_001318.1"/>
</dbReference>
<dbReference type="RefSeq" id="WP_002557079.1">
    <property type="nucleotide sequence ID" value="NC_001318.1"/>
</dbReference>
<dbReference type="PDB" id="8FMW">
    <property type="method" value="EM"/>
    <property type="resolution" value="2.86 A"/>
    <property type="chains" value="AM=1-122"/>
</dbReference>
<dbReference type="PDB" id="8FN2">
    <property type="method" value="EM"/>
    <property type="resolution" value="3.40 A"/>
    <property type="chains" value="M=1-122"/>
</dbReference>
<dbReference type="PDBsum" id="8FMW"/>
<dbReference type="PDBsum" id="8FN2"/>
<dbReference type="EMDB" id="EMD-29298"/>
<dbReference type="EMDB" id="EMD-29304"/>
<dbReference type="SMR" id="O51441"/>
<dbReference type="STRING" id="224326.BB_0488"/>
<dbReference type="PaxDb" id="224326-BB_0488"/>
<dbReference type="EnsemblBacteria" id="AAC66854">
    <property type="protein sequence ID" value="AAC66854"/>
    <property type="gene ID" value="BB_0488"/>
</dbReference>
<dbReference type="KEGG" id="bbu:BB_0488"/>
<dbReference type="PATRIC" id="fig|224326.49.peg.879"/>
<dbReference type="HOGENOM" id="CLU_095071_2_1_12"/>
<dbReference type="OrthoDB" id="9806379at2"/>
<dbReference type="Proteomes" id="UP000001807">
    <property type="component" value="Chromosome"/>
</dbReference>
<dbReference type="GO" id="GO:0022625">
    <property type="term" value="C:cytosolic large ribosomal subunit"/>
    <property type="evidence" value="ECO:0007669"/>
    <property type="project" value="TreeGrafter"/>
</dbReference>
<dbReference type="GO" id="GO:0070180">
    <property type="term" value="F:large ribosomal subunit rRNA binding"/>
    <property type="evidence" value="ECO:0007669"/>
    <property type="project" value="TreeGrafter"/>
</dbReference>
<dbReference type="GO" id="GO:0003735">
    <property type="term" value="F:structural constituent of ribosome"/>
    <property type="evidence" value="ECO:0007669"/>
    <property type="project" value="InterPro"/>
</dbReference>
<dbReference type="GO" id="GO:0006412">
    <property type="term" value="P:translation"/>
    <property type="evidence" value="ECO:0007669"/>
    <property type="project" value="UniProtKB-UniRule"/>
</dbReference>
<dbReference type="CDD" id="cd00337">
    <property type="entry name" value="Ribosomal_uL14"/>
    <property type="match status" value="1"/>
</dbReference>
<dbReference type="FunFam" id="2.40.150.20:FF:000001">
    <property type="entry name" value="50S ribosomal protein L14"/>
    <property type="match status" value="1"/>
</dbReference>
<dbReference type="Gene3D" id="2.40.150.20">
    <property type="entry name" value="Ribosomal protein L14"/>
    <property type="match status" value="1"/>
</dbReference>
<dbReference type="HAMAP" id="MF_01367">
    <property type="entry name" value="Ribosomal_uL14"/>
    <property type="match status" value="1"/>
</dbReference>
<dbReference type="InterPro" id="IPR000218">
    <property type="entry name" value="Ribosomal_uL14"/>
</dbReference>
<dbReference type="InterPro" id="IPR005745">
    <property type="entry name" value="Ribosomal_uL14_bac-type"/>
</dbReference>
<dbReference type="InterPro" id="IPR019972">
    <property type="entry name" value="Ribosomal_uL14_CS"/>
</dbReference>
<dbReference type="InterPro" id="IPR036853">
    <property type="entry name" value="Ribosomal_uL14_sf"/>
</dbReference>
<dbReference type="NCBIfam" id="TIGR01067">
    <property type="entry name" value="rplN_bact"/>
    <property type="match status" value="1"/>
</dbReference>
<dbReference type="PANTHER" id="PTHR11761">
    <property type="entry name" value="50S/60S RIBOSOMAL PROTEIN L14/L23"/>
    <property type="match status" value="1"/>
</dbReference>
<dbReference type="PANTHER" id="PTHR11761:SF3">
    <property type="entry name" value="LARGE RIBOSOMAL SUBUNIT PROTEIN UL14M"/>
    <property type="match status" value="1"/>
</dbReference>
<dbReference type="Pfam" id="PF00238">
    <property type="entry name" value="Ribosomal_L14"/>
    <property type="match status" value="1"/>
</dbReference>
<dbReference type="SMART" id="SM01374">
    <property type="entry name" value="Ribosomal_L14"/>
    <property type="match status" value="1"/>
</dbReference>
<dbReference type="SUPFAM" id="SSF50193">
    <property type="entry name" value="Ribosomal protein L14"/>
    <property type="match status" value="1"/>
</dbReference>
<dbReference type="PROSITE" id="PS00049">
    <property type="entry name" value="RIBOSOMAL_L14"/>
    <property type="match status" value="1"/>
</dbReference>
<accession>O51441</accession>
<proteinExistence type="evidence at protein level"/>
<evidence type="ECO:0000255" key="1">
    <source>
        <dbReference type="HAMAP-Rule" id="MF_01367"/>
    </source>
</evidence>
<evidence type="ECO:0000305" key="2"/>
<evidence type="ECO:0007829" key="3">
    <source>
        <dbReference type="PDB" id="8FN2"/>
    </source>
</evidence>
<comment type="function">
    <text evidence="1">Binds to 23S rRNA. Forms part of two intersubunit bridges in the 70S ribosome.</text>
</comment>
<comment type="subunit">
    <text evidence="1">Part of the 50S ribosomal subunit. Forms a cluster with proteins L3 and L19. In the 70S ribosome, L14 and L19 interact and together make contacts with the 16S rRNA in bridges B5 and B8.</text>
</comment>
<comment type="similarity">
    <text evidence="1">Belongs to the universal ribosomal protein uL14 family.</text>
</comment>
<sequence>MIQMQTYLTIADNTGGKVAQCIKVLGGSKRRYAKIGDIITIVVKQAIPNSSVKKGDVYKAVIVRTSKEVRRKNGTYVRFDDNACVILDANLSPRGKRVFGPVARELRDANFMKVVSLASEVI</sequence>
<keyword id="KW-0002">3D-structure</keyword>
<keyword id="KW-1185">Reference proteome</keyword>
<keyword id="KW-0687">Ribonucleoprotein</keyword>
<keyword id="KW-0689">Ribosomal protein</keyword>
<keyword id="KW-0694">RNA-binding</keyword>
<keyword id="KW-0699">rRNA-binding</keyword>
<feature type="chain" id="PRO_0000128531" description="Large ribosomal subunit protein uL14">
    <location>
        <begin position="1"/>
        <end position="122"/>
    </location>
</feature>
<feature type="strand" evidence="3">
    <location>
        <begin position="7"/>
        <end position="10"/>
    </location>
</feature>
<feature type="strand" evidence="3">
    <location>
        <begin position="15"/>
        <end position="24"/>
    </location>
</feature>
<feature type="strand" evidence="3">
    <location>
        <begin position="26"/>
        <end position="29"/>
    </location>
</feature>
<feature type="strand" evidence="3">
    <location>
        <begin position="38"/>
        <end position="46"/>
    </location>
</feature>
<feature type="strand" evidence="3">
    <location>
        <begin position="57"/>
        <end position="64"/>
    </location>
</feature>
<feature type="strand" evidence="3">
    <location>
        <begin position="76"/>
        <end position="81"/>
    </location>
</feature>
<feature type="strand" evidence="3">
    <location>
        <begin position="83"/>
        <end position="87"/>
    </location>
</feature>
<feature type="strand" evidence="3">
    <location>
        <begin position="91"/>
        <end position="96"/>
    </location>
</feature>
<feature type="helix" evidence="3">
    <location>
        <begin position="105"/>
        <end position="108"/>
    </location>
</feature>
<feature type="helix" evidence="3">
    <location>
        <begin position="112"/>
        <end position="117"/>
    </location>
</feature>
<protein>
    <recommendedName>
        <fullName evidence="1">Large ribosomal subunit protein uL14</fullName>
    </recommendedName>
    <alternativeName>
        <fullName evidence="2">50S ribosomal protein L14</fullName>
    </alternativeName>
</protein>
<reference key="1">
    <citation type="journal article" date="1997" name="Nature">
        <title>Genomic sequence of a Lyme disease spirochaete, Borrelia burgdorferi.</title>
        <authorList>
            <person name="Fraser C.M."/>
            <person name="Casjens S."/>
            <person name="Huang W.M."/>
            <person name="Sutton G.G."/>
            <person name="Clayton R.A."/>
            <person name="Lathigra R."/>
            <person name="White O."/>
            <person name="Ketchum K.A."/>
            <person name="Dodson R.J."/>
            <person name="Hickey E.K."/>
            <person name="Gwinn M.L."/>
            <person name="Dougherty B.A."/>
            <person name="Tomb J.-F."/>
            <person name="Fleischmann R.D."/>
            <person name="Richardson D.L."/>
            <person name="Peterson J.D."/>
            <person name="Kerlavage A.R."/>
            <person name="Quackenbush J."/>
            <person name="Salzberg S.L."/>
            <person name="Hanson M."/>
            <person name="van Vugt R."/>
            <person name="Palmer N."/>
            <person name="Adams M.D."/>
            <person name="Gocayne J.D."/>
            <person name="Weidman J.F."/>
            <person name="Utterback T.R."/>
            <person name="Watthey L."/>
            <person name="McDonald L.A."/>
            <person name="Artiach P."/>
            <person name="Bowman C."/>
            <person name="Garland S.A."/>
            <person name="Fujii C."/>
            <person name="Cotton M.D."/>
            <person name="Horst K."/>
            <person name="Roberts K.M."/>
            <person name="Hatch B."/>
            <person name="Smith H.O."/>
            <person name="Venter J.C."/>
        </authorList>
    </citation>
    <scope>NUCLEOTIDE SEQUENCE [LARGE SCALE GENOMIC DNA]</scope>
    <source>
        <strain>ATCC 35210 / DSM 4680 / CIP 102532 / B31</strain>
    </source>
</reference>
<gene>
    <name evidence="1" type="primary">rplN</name>
    <name type="ordered locus">BB_0488</name>
</gene>
<organism>
    <name type="scientific">Borreliella burgdorferi (strain ATCC 35210 / DSM 4680 / CIP 102532 / B31)</name>
    <name type="common">Borrelia burgdorferi</name>
    <dbReference type="NCBI Taxonomy" id="224326"/>
    <lineage>
        <taxon>Bacteria</taxon>
        <taxon>Pseudomonadati</taxon>
        <taxon>Spirochaetota</taxon>
        <taxon>Spirochaetia</taxon>
        <taxon>Spirochaetales</taxon>
        <taxon>Borreliaceae</taxon>
        <taxon>Borreliella</taxon>
    </lineage>
</organism>
<name>RL14_BORBU</name>